<sequence>MSQRQQRVADLIHQQLAELLKKEVRDSRLSKISLTAVSISPDLKQAKVFYSLLENQNEKEVQKALNKATGYLRHLLAQATVLRYVPKLEFVYDESIERAHRISLLIERALKKDDSDESS</sequence>
<dbReference type="EMBL" id="CP001020">
    <property type="protein sequence ID" value="ACJ19872.1"/>
    <property type="molecule type" value="Genomic_DNA"/>
</dbReference>
<dbReference type="RefSeq" id="WP_005769039.1">
    <property type="nucleotide sequence ID" value="NC_011528.1"/>
</dbReference>
<dbReference type="SMR" id="B6J6B2"/>
<dbReference type="KEGG" id="cbc:CbuK_0604"/>
<dbReference type="HOGENOM" id="CLU_089475_5_1_6"/>
<dbReference type="GO" id="GO:0005829">
    <property type="term" value="C:cytosol"/>
    <property type="evidence" value="ECO:0007669"/>
    <property type="project" value="TreeGrafter"/>
</dbReference>
<dbReference type="GO" id="GO:0043024">
    <property type="term" value="F:ribosomal small subunit binding"/>
    <property type="evidence" value="ECO:0007669"/>
    <property type="project" value="TreeGrafter"/>
</dbReference>
<dbReference type="GO" id="GO:0030490">
    <property type="term" value="P:maturation of SSU-rRNA"/>
    <property type="evidence" value="ECO:0007669"/>
    <property type="project" value="UniProtKB-UniRule"/>
</dbReference>
<dbReference type="Gene3D" id="3.30.300.20">
    <property type="match status" value="1"/>
</dbReference>
<dbReference type="HAMAP" id="MF_00003">
    <property type="entry name" value="RbfA"/>
    <property type="match status" value="1"/>
</dbReference>
<dbReference type="InterPro" id="IPR015946">
    <property type="entry name" value="KH_dom-like_a/b"/>
</dbReference>
<dbReference type="InterPro" id="IPR000238">
    <property type="entry name" value="RbfA"/>
</dbReference>
<dbReference type="InterPro" id="IPR023799">
    <property type="entry name" value="RbfA_dom_sf"/>
</dbReference>
<dbReference type="InterPro" id="IPR020053">
    <property type="entry name" value="Ribosome-bd_factorA_CS"/>
</dbReference>
<dbReference type="NCBIfam" id="NF010390">
    <property type="entry name" value="PRK13817.1"/>
    <property type="match status" value="1"/>
</dbReference>
<dbReference type="NCBIfam" id="TIGR00082">
    <property type="entry name" value="rbfA"/>
    <property type="match status" value="1"/>
</dbReference>
<dbReference type="PANTHER" id="PTHR33515">
    <property type="entry name" value="RIBOSOME-BINDING FACTOR A, CHLOROPLASTIC-RELATED"/>
    <property type="match status" value="1"/>
</dbReference>
<dbReference type="PANTHER" id="PTHR33515:SF1">
    <property type="entry name" value="RIBOSOME-BINDING FACTOR A, CHLOROPLASTIC-RELATED"/>
    <property type="match status" value="1"/>
</dbReference>
<dbReference type="Pfam" id="PF02033">
    <property type="entry name" value="RBFA"/>
    <property type="match status" value="1"/>
</dbReference>
<dbReference type="SUPFAM" id="SSF89919">
    <property type="entry name" value="Ribosome-binding factor A, RbfA"/>
    <property type="match status" value="1"/>
</dbReference>
<dbReference type="PROSITE" id="PS01319">
    <property type="entry name" value="RBFA"/>
    <property type="match status" value="1"/>
</dbReference>
<name>RBFA_COXB1</name>
<comment type="function">
    <text evidence="1">One of several proteins that assist in the late maturation steps of the functional core of the 30S ribosomal subunit. Associates with free 30S ribosomal subunits (but not with 30S subunits that are part of 70S ribosomes or polysomes). Required for efficient processing of 16S rRNA. May interact with the 5'-terminal helix region of 16S rRNA.</text>
</comment>
<comment type="subunit">
    <text evidence="1">Monomer. Binds 30S ribosomal subunits, but not 50S ribosomal subunits or 70S ribosomes.</text>
</comment>
<comment type="subcellular location">
    <subcellularLocation>
        <location evidence="1">Cytoplasm</location>
    </subcellularLocation>
</comment>
<comment type="similarity">
    <text evidence="1">Belongs to the RbfA family.</text>
</comment>
<feature type="chain" id="PRO_1000088879" description="Ribosome-binding factor A">
    <location>
        <begin position="1"/>
        <end position="119"/>
    </location>
</feature>
<protein>
    <recommendedName>
        <fullName evidence="1">Ribosome-binding factor A</fullName>
    </recommendedName>
</protein>
<evidence type="ECO:0000255" key="1">
    <source>
        <dbReference type="HAMAP-Rule" id="MF_00003"/>
    </source>
</evidence>
<reference key="1">
    <citation type="journal article" date="2009" name="Infect. Immun.">
        <title>Comparative genomics reveal extensive transposon-mediated genomic plasticity and diversity among potential effector proteins within the genus Coxiella.</title>
        <authorList>
            <person name="Beare P.A."/>
            <person name="Unsworth N."/>
            <person name="Andoh M."/>
            <person name="Voth D.E."/>
            <person name="Omsland A."/>
            <person name="Gilk S.D."/>
            <person name="Williams K.P."/>
            <person name="Sobral B.W."/>
            <person name="Kupko J.J. III"/>
            <person name="Porcella S.F."/>
            <person name="Samuel J.E."/>
            <person name="Heinzen R.A."/>
        </authorList>
    </citation>
    <scope>NUCLEOTIDE SEQUENCE [LARGE SCALE GENOMIC DNA]</scope>
    <source>
        <strain>CbuK_Q154</strain>
    </source>
</reference>
<accession>B6J6B2</accession>
<keyword id="KW-0963">Cytoplasm</keyword>
<keyword id="KW-0690">Ribosome biogenesis</keyword>
<gene>
    <name evidence="1" type="primary">rbfA</name>
    <name type="ordered locus">CbuK_0604</name>
</gene>
<organism>
    <name type="scientific">Coxiella burnetii (strain CbuK_Q154)</name>
    <name type="common">Coxiella burnetii (strain Q154)</name>
    <dbReference type="NCBI Taxonomy" id="434924"/>
    <lineage>
        <taxon>Bacteria</taxon>
        <taxon>Pseudomonadati</taxon>
        <taxon>Pseudomonadota</taxon>
        <taxon>Gammaproteobacteria</taxon>
        <taxon>Legionellales</taxon>
        <taxon>Coxiellaceae</taxon>
        <taxon>Coxiella</taxon>
    </lineage>
</organism>
<proteinExistence type="inferred from homology"/>